<feature type="chain" id="PRO_0000258894" description="UPF0301 protein XOO1309">
    <location>
        <begin position="1"/>
        <end position="188"/>
    </location>
</feature>
<accession>Q2P5W3</accession>
<evidence type="ECO:0000255" key="1">
    <source>
        <dbReference type="HAMAP-Rule" id="MF_00758"/>
    </source>
</evidence>
<name>Y1309_XANOM</name>
<sequence length="188" mass="20129">MSVLPTPLANQLLIALPALSDPTFSRSVALICQHDENGAMGVLVNRPSEYTLGEVLSQMGIDTDDEPLREQIVLSGGPVHPERGFVIHDDAREWDSSLEVGQGVFLTTSRDILEAMAAGNGPRNVLVALGCAGWGAGQLEFELGENSWLTAPSDANVLFATALEDRWQTAAGRIGVDLFRLTDYSGHA</sequence>
<protein>
    <recommendedName>
        <fullName evidence="1">UPF0301 protein XOO1309</fullName>
    </recommendedName>
</protein>
<comment type="similarity">
    <text evidence="1">Belongs to the UPF0301 (AlgH) family.</text>
</comment>
<organism>
    <name type="scientific">Xanthomonas oryzae pv. oryzae (strain MAFF 311018)</name>
    <dbReference type="NCBI Taxonomy" id="342109"/>
    <lineage>
        <taxon>Bacteria</taxon>
        <taxon>Pseudomonadati</taxon>
        <taxon>Pseudomonadota</taxon>
        <taxon>Gammaproteobacteria</taxon>
        <taxon>Lysobacterales</taxon>
        <taxon>Lysobacteraceae</taxon>
        <taxon>Xanthomonas</taxon>
    </lineage>
</organism>
<gene>
    <name type="ordered locus">XOO1309</name>
</gene>
<proteinExistence type="inferred from homology"/>
<reference key="1">
    <citation type="journal article" date="2005" name="Jpn. Agric. Res. Q.">
        <title>Genome sequence of Xanthomonas oryzae pv. oryzae suggests contribution of large numbers of effector genes and insertion sequences to its race diversity.</title>
        <authorList>
            <person name="Ochiai H."/>
            <person name="Inoue Y."/>
            <person name="Takeya M."/>
            <person name="Sasaki A."/>
            <person name="Kaku H."/>
        </authorList>
    </citation>
    <scope>NUCLEOTIDE SEQUENCE [LARGE SCALE GENOMIC DNA]</scope>
    <source>
        <strain>MAFF 311018</strain>
    </source>
</reference>
<dbReference type="EMBL" id="AP008229">
    <property type="protein sequence ID" value="BAE68064.1"/>
    <property type="molecule type" value="Genomic_DNA"/>
</dbReference>
<dbReference type="RefSeq" id="WP_011258225.1">
    <property type="nucleotide sequence ID" value="NC_007705.1"/>
</dbReference>
<dbReference type="SMR" id="Q2P5W3"/>
<dbReference type="KEGG" id="xom:XOO1309"/>
<dbReference type="HOGENOM" id="CLU_057596_1_0_6"/>
<dbReference type="GO" id="GO:0005829">
    <property type="term" value="C:cytosol"/>
    <property type="evidence" value="ECO:0007669"/>
    <property type="project" value="TreeGrafter"/>
</dbReference>
<dbReference type="Gene3D" id="3.40.1740.10">
    <property type="entry name" value="VC0467-like"/>
    <property type="match status" value="1"/>
</dbReference>
<dbReference type="HAMAP" id="MF_00758">
    <property type="entry name" value="UPF0301"/>
    <property type="match status" value="1"/>
</dbReference>
<dbReference type="InterPro" id="IPR003774">
    <property type="entry name" value="AlgH-like"/>
</dbReference>
<dbReference type="NCBIfam" id="NF001266">
    <property type="entry name" value="PRK00228.1-1"/>
    <property type="match status" value="1"/>
</dbReference>
<dbReference type="PANTHER" id="PTHR30327">
    <property type="entry name" value="UNCHARACTERIZED PROTEIN YQGE"/>
    <property type="match status" value="1"/>
</dbReference>
<dbReference type="PANTHER" id="PTHR30327:SF1">
    <property type="entry name" value="UPF0301 PROTEIN YQGE"/>
    <property type="match status" value="1"/>
</dbReference>
<dbReference type="Pfam" id="PF02622">
    <property type="entry name" value="DUF179"/>
    <property type="match status" value="1"/>
</dbReference>
<dbReference type="SUPFAM" id="SSF143456">
    <property type="entry name" value="VC0467-like"/>
    <property type="match status" value="1"/>
</dbReference>